<reference key="1">
    <citation type="journal article" date="2006" name="Proc. Natl. Acad. Sci. U.S.A.">
        <title>Identification of genes subject to positive selection in uropathogenic strains of Escherichia coli: a comparative genomics approach.</title>
        <authorList>
            <person name="Chen S.L."/>
            <person name="Hung C.-S."/>
            <person name="Xu J."/>
            <person name="Reigstad C.S."/>
            <person name="Magrini V."/>
            <person name="Sabo A."/>
            <person name="Blasiar D."/>
            <person name="Bieri T."/>
            <person name="Meyer R.R."/>
            <person name="Ozersky P."/>
            <person name="Armstrong J.R."/>
            <person name="Fulton R.S."/>
            <person name="Latreille J.P."/>
            <person name="Spieth J."/>
            <person name="Hooton T.M."/>
            <person name="Mardis E.R."/>
            <person name="Hultgren S.J."/>
            <person name="Gordon J.I."/>
        </authorList>
    </citation>
    <scope>NUCLEOTIDE SEQUENCE [LARGE SCALE GENOMIC DNA]</scope>
    <source>
        <strain>UTI89 / UPEC</strain>
    </source>
</reference>
<name>EFPL_ECOUT</name>
<accession>Q1R9P8</accession>
<organism>
    <name type="scientific">Escherichia coli (strain UTI89 / UPEC)</name>
    <dbReference type="NCBI Taxonomy" id="364106"/>
    <lineage>
        <taxon>Bacteria</taxon>
        <taxon>Pseudomonadati</taxon>
        <taxon>Pseudomonadota</taxon>
        <taxon>Gammaproteobacteria</taxon>
        <taxon>Enterobacterales</taxon>
        <taxon>Enterobacteriaceae</taxon>
        <taxon>Escherichia</taxon>
    </lineage>
</organism>
<dbReference type="EMBL" id="CP000243">
    <property type="protein sequence ID" value="ABE07916.1"/>
    <property type="status" value="ALT_INIT"/>
    <property type="molecule type" value="Genomic_DNA"/>
</dbReference>
<dbReference type="RefSeq" id="WP_001136827.1">
    <property type="nucleotide sequence ID" value="NZ_CP064825.1"/>
</dbReference>
<dbReference type="SMR" id="Q1R9P8"/>
<dbReference type="GeneID" id="93775010"/>
<dbReference type="KEGG" id="eci:UTI89_C2448"/>
<dbReference type="HOGENOM" id="CLU_074944_2_0_6"/>
<dbReference type="Proteomes" id="UP000001952">
    <property type="component" value="Chromosome"/>
</dbReference>
<dbReference type="GO" id="GO:0005829">
    <property type="term" value="C:cytosol"/>
    <property type="evidence" value="ECO:0007669"/>
    <property type="project" value="UniProtKB-ARBA"/>
</dbReference>
<dbReference type="GO" id="GO:0003746">
    <property type="term" value="F:translation elongation factor activity"/>
    <property type="evidence" value="ECO:0007669"/>
    <property type="project" value="UniProtKB-UniRule"/>
</dbReference>
<dbReference type="GO" id="GO:0043043">
    <property type="term" value="P:peptide biosynthetic process"/>
    <property type="evidence" value="ECO:0007669"/>
    <property type="project" value="InterPro"/>
</dbReference>
<dbReference type="CDD" id="cd04470">
    <property type="entry name" value="S1_EF-P_repeat_1"/>
    <property type="match status" value="1"/>
</dbReference>
<dbReference type="CDD" id="cd05794">
    <property type="entry name" value="S1_EF-P_repeat_2"/>
    <property type="match status" value="1"/>
</dbReference>
<dbReference type="FunFam" id="2.40.50.140:FF:000004">
    <property type="entry name" value="Elongation factor P"/>
    <property type="match status" value="1"/>
</dbReference>
<dbReference type="FunFam" id="2.30.30.30:FF:000011">
    <property type="entry name" value="Elongation factor P-like protein"/>
    <property type="match status" value="1"/>
</dbReference>
<dbReference type="FunFam" id="2.40.50.140:FF:000053">
    <property type="entry name" value="Elongation factor P-like protein"/>
    <property type="match status" value="1"/>
</dbReference>
<dbReference type="Gene3D" id="2.30.30.30">
    <property type="match status" value="1"/>
</dbReference>
<dbReference type="Gene3D" id="2.40.50.140">
    <property type="entry name" value="Nucleic acid-binding proteins"/>
    <property type="match status" value="2"/>
</dbReference>
<dbReference type="HAMAP" id="MF_00646">
    <property type="entry name" value="EFP"/>
    <property type="match status" value="1"/>
</dbReference>
<dbReference type="InterPro" id="IPR015365">
    <property type="entry name" value="Elong-fact-P_C"/>
</dbReference>
<dbReference type="InterPro" id="IPR012340">
    <property type="entry name" value="NA-bd_OB-fold"/>
</dbReference>
<dbReference type="InterPro" id="IPR014722">
    <property type="entry name" value="Rib_uL2_dom2"/>
</dbReference>
<dbReference type="InterPro" id="IPR020599">
    <property type="entry name" value="Transl_elong_fac_P/YeiP"/>
</dbReference>
<dbReference type="InterPro" id="IPR013185">
    <property type="entry name" value="Transl_elong_KOW-like"/>
</dbReference>
<dbReference type="InterPro" id="IPR011897">
    <property type="entry name" value="Transl_elong_p-like_YeiP"/>
</dbReference>
<dbReference type="InterPro" id="IPR001059">
    <property type="entry name" value="Transl_elong_P/YeiP_cen"/>
</dbReference>
<dbReference type="InterPro" id="IPR013852">
    <property type="entry name" value="Transl_elong_P/YeiP_CS"/>
</dbReference>
<dbReference type="InterPro" id="IPR008991">
    <property type="entry name" value="Translation_prot_SH3-like_sf"/>
</dbReference>
<dbReference type="NCBIfam" id="NF001810">
    <property type="entry name" value="PRK00529.1"/>
    <property type="match status" value="1"/>
</dbReference>
<dbReference type="NCBIfam" id="NF003392">
    <property type="entry name" value="PRK04542.1"/>
    <property type="match status" value="1"/>
</dbReference>
<dbReference type="NCBIfam" id="TIGR02178">
    <property type="entry name" value="yeiP"/>
    <property type="match status" value="1"/>
</dbReference>
<dbReference type="PANTHER" id="PTHR30053">
    <property type="entry name" value="ELONGATION FACTOR P"/>
    <property type="match status" value="1"/>
</dbReference>
<dbReference type="PANTHER" id="PTHR30053:SF14">
    <property type="entry name" value="TRANSLATION ELONGATION FACTOR KOW-LIKE DOMAIN-CONTAINING PROTEIN"/>
    <property type="match status" value="1"/>
</dbReference>
<dbReference type="Pfam" id="PF01132">
    <property type="entry name" value="EFP"/>
    <property type="match status" value="1"/>
</dbReference>
<dbReference type="Pfam" id="PF08207">
    <property type="entry name" value="EFP_N"/>
    <property type="match status" value="1"/>
</dbReference>
<dbReference type="Pfam" id="PF09285">
    <property type="entry name" value="Elong-fact-P_C"/>
    <property type="match status" value="1"/>
</dbReference>
<dbReference type="PIRSF" id="PIRSF005901">
    <property type="entry name" value="EF-P"/>
    <property type="match status" value="1"/>
</dbReference>
<dbReference type="SMART" id="SM01185">
    <property type="entry name" value="EFP"/>
    <property type="match status" value="1"/>
</dbReference>
<dbReference type="SMART" id="SM00841">
    <property type="entry name" value="Elong-fact-P_C"/>
    <property type="match status" value="1"/>
</dbReference>
<dbReference type="SUPFAM" id="SSF50249">
    <property type="entry name" value="Nucleic acid-binding proteins"/>
    <property type="match status" value="2"/>
</dbReference>
<dbReference type="SUPFAM" id="SSF50104">
    <property type="entry name" value="Translation proteins SH3-like domain"/>
    <property type="match status" value="1"/>
</dbReference>
<dbReference type="PROSITE" id="PS01275">
    <property type="entry name" value="EFP"/>
    <property type="match status" value="1"/>
</dbReference>
<gene>
    <name evidence="1" type="primary">yeiP</name>
    <name type="ordered locus">UTI89_C2448</name>
</gene>
<comment type="similarity">
    <text evidence="1">Belongs to the elongation factor P family.</text>
</comment>
<comment type="sequence caution" evidence="2">
    <conflict type="erroneous initiation">
        <sequence resource="EMBL-CDS" id="ABE07916"/>
    </conflict>
</comment>
<sequence length="190" mass="21533">MPRANEIKKGMVLNYNGKLLLVKDIDIQSPTARGAATLYKMRFSDVRTGLKVEERFKGDDIVDTVTLTRRYVDFSYVDGNEYVFMDKEDYTPYTFTKDQIEEELLFMPEGGMPDMQVLTWDGQLLALELPQTVDLEIVETAPGIKGASASARNKPATLSTGLVIQVPEYLSPGEKIRIHIEERRYMGRAD</sequence>
<proteinExistence type="inferred from homology"/>
<feature type="chain" id="PRO_0000259895" description="Elongation factor P-like protein">
    <location>
        <begin position="1"/>
        <end position="190"/>
    </location>
</feature>
<evidence type="ECO:0000255" key="1">
    <source>
        <dbReference type="HAMAP-Rule" id="MF_00646"/>
    </source>
</evidence>
<evidence type="ECO:0000305" key="2"/>
<protein>
    <recommendedName>
        <fullName evidence="1">Elongation factor P-like protein</fullName>
    </recommendedName>
</protein>